<organism>
    <name type="scientific">Alcanivorax borkumensis (strain ATCC 700651 / DSM 11573 / NCIMB 13689 / SK2)</name>
    <dbReference type="NCBI Taxonomy" id="393595"/>
    <lineage>
        <taxon>Bacteria</taxon>
        <taxon>Pseudomonadati</taxon>
        <taxon>Pseudomonadota</taxon>
        <taxon>Gammaproteobacteria</taxon>
        <taxon>Oceanospirillales</taxon>
        <taxon>Alcanivoracaceae</taxon>
        <taxon>Alcanivorax</taxon>
    </lineage>
</organism>
<gene>
    <name evidence="1" type="primary">mtnB</name>
    <name type="ordered locus">ABO_1445</name>
</gene>
<proteinExistence type="inferred from homology"/>
<accession>Q0VPK5</accession>
<protein>
    <recommendedName>
        <fullName evidence="1">Methylthioribulose-1-phosphate dehydratase</fullName>
        <shortName evidence="1">MTRu-1-P dehydratase</shortName>
        <ecNumber evidence="1">4.2.1.109</ecNumber>
    </recommendedName>
</protein>
<comment type="function">
    <text evidence="1">Catalyzes the dehydration of methylthioribulose-1-phosphate (MTRu-1-P) into 2,3-diketo-5-methylthiopentyl-1-phosphate (DK-MTP-1-P).</text>
</comment>
<comment type="catalytic activity">
    <reaction evidence="1">
        <text>5-(methylsulfanyl)-D-ribulose 1-phosphate = 5-methylsulfanyl-2,3-dioxopentyl phosphate + H2O</text>
        <dbReference type="Rhea" id="RHEA:15549"/>
        <dbReference type="ChEBI" id="CHEBI:15377"/>
        <dbReference type="ChEBI" id="CHEBI:58548"/>
        <dbReference type="ChEBI" id="CHEBI:58828"/>
        <dbReference type="EC" id="4.2.1.109"/>
    </reaction>
</comment>
<comment type="cofactor">
    <cofactor evidence="1">
        <name>Zn(2+)</name>
        <dbReference type="ChEBI" id="CHEBI:29105"/>
    </cofactor>
    <text evidence="1">Binds 1 zinc ion per subunit.</text>
</comment>
<comment type="pathway">
    <text evidence="1">Amino-acid biosynthesis; L-methionine biosynthesis via salvage pathway; L-methionine from S-methyl-5-thio-alpha-D-ribose 1-phosphate: step 2/6.</text>
</comment>
<comment type="similarity">
    <text evidence="1">Belongs to the aldolase class II family. MtnB subfamily.</text>
</comment>
<feature type="chain" id="PRO_0000357061" description="Methylthioribulose-1-phosphate dehydratase">
    <location>
        <begin position="1"/>
        <end position="211"/>
    </location>
</feature>
<feature type="binding site" evidence="1">
    <location>
        <position position="101"/>
    </location>
    <ligand>
        <name>Zn(2+)</name>
        <dbReference type="ChEBI" id="CHEBI:29105"/>
    </ligand>
</feature>
<feature type="binding site" evidence="1">
    <location>
        <position position="103"/>
    </location>
    <ligand>
        <name>Zn(2+)</name>
        <dbReference type="ChEBI" id="CHEBI:29105"/>
    </ligand>
</feature>
<reference key="1">
    <citation type="journal article" date="2006" name="Nat. Biotechnol.">
        <title>Genome sequence of the ubiquitous hydrocarbon-degrading marine bacterium Alcanivorax borkumensis.</title>
        <authorList>
            <person name="Schneiker S."/>
            <person name="Martins dos Santos V.A.P."/>
            <person name="Bartels D."/>
            <person name="Bekel T."/>
            <person name="Brecht M."/>
            <person name="Buhrmester J."/>
            <person name="Chernikova T.N."/>
            <person name="Denaro R."/>
            <person name="Ferrer M."/>
            <person name="Gertler C."/>
            <person name="Goesmann A."/>
            <person name="Golyshina O.V."/>
            <person name="Kaminski F."/>
            <person name="Khachane A.N."/>
            <person name="Lang S."/>
            <person name="Linke B."/>
            <person name="McHardy A.C."/>
            <person name="Meyer F."/>
            <person name="Nechitaylo T."/>
            <person name="Puehler A."/>
            <person name="Regenhardt D."/>
            <person name="Rupp O."/>
            <person name="Sabirova J.S."/>
            <person name="Selbitschka W."/>
            <person name="Yakimov M.M."/>
            <person name="Timmis K.N."/>
            <person name="Vorhoelter F.-J."/>
            <person name="Weidner S."/>
            <person name="Kaiser O."/>
            <person name="Golyshin P.N."/>
        </authorList>
    </citation>
    <scope>NUCLEOTIDE SEQUENCE [LARGE SCALE GENOMIC DNA]</scope>
    <source>
        <strain>ATCC 700651 / DSM 11573 / NCIMB 13689 / SK2</strain>
    </source>
</reference>
<name>MTNB_ALCBS</name>
<sequence length="211" mass="23325">MPERPYSTTVFRDAARALAATGQRIYANGWSPATSSNYSQRLNTDFAAVTQSGKDKGLLRETDIMAVNMDGQPASSGKPSAETLLHTQLYRFDGNIQAVLHTHSHASTVLTMHWPANSITLEGYELLKALQGITSHNSRLTIPVFENTQDIAALAAKVDQQMRSGHISHAYLIRGHGLYTWANDLPTCYRQLEALETLLAIELECRRLRGS</sequence>
<keyword id="KW-0028">Amino-acid biosynthesis</keyword>
<keyword id="KW-0456">Lyase</keyword>
<keyword id="KW-0479">Metal-binding</keyword>
<keyword id="KW-0486">Methionine biosynthesis</keyword>
<keyword id="KW-1185">Reference proteome</keyword>
<keyword id="KW-0862">Zinc</keyword>
<dbReference type="EC" id="4.2.1.109" evidence="1"/>
<dbReference type="EMBL" id="AM286690">
    <property type="protein sequence ID" value="CAL16893.1"/>
    <property type="molecule type" value="Genomic_DNA"/>
</dbReference>
<dbReference type="RefSeq" id="WP_011588726.1">
    <property type="nucleotide sequence ID" value="NC_008260.1"/>
</dbReference>
<dbReference type="SMR" id="Q0VPK5"/>
<dbReference type="STRING" id="393595.ABO_1445"/>
<dbReference type="KEGG" id="abo:ABO_1445"/>
<dbReference type="eggNOG" id="COG0235">
    <property type="taxonomic scope" value="Bacteria"/>
</dbReference>
<dbReference type="HOGENOM" id="CLU_006033_4_1_6"/>
<dbReference type="OrthoDB" id="9805559at2"/>
<dbReference type="UniPathway" id="UPA00904">
    <property type="reaction ID" value="UER00875"/>
</dbReference>
<dbReference type="Proteomes" id="UP000008871">
    <property type="component" value="Chromosome"/>
</dbReference>
<dbReference type="GO" id="GO:0005737">
    <property type="term" value="C:cytoplasm"/>
    <property type="evidence" value="ECO:0007669"/>
    <property type="project" value="InterPro"/>
</dbReference>
<dbReference type="GO" id="GO:0046570">
    <property type="term" value="F:methylthioribulose 1-phosphate dehydratase activity"/>
    <property type="evidence" value="ECO:0007669"/>
    <property type="project" value="UniProtKB-UniRule"/>
</dbReference>
<dbReference type="GO" id="GO:0008270">
    <property type="term" value="F:zinc ion binding"/>
    <property type="evidence" value="ECO:0007669"/>
    <property type="project" value="UniProtKB-UniRule"/>
</dbReference>
<dbReference type="GO" id="GO:0019509">
    <property type="term" value="P:L-methionine salvage from methylthioadenosine"/>
    <property type="evidence" value="ECO:0007669"/>
    <property type="project" value="UniProtKB-UniRule"/>
</dbReference>
<dbReference type="GO" id="GO:0005996">
    <property type="term" value="P:monosaccharide metabolic process"/>
    <property type="evidence" value="ECO:0007669"/>
    <property type="project" value="UniProtKB-ARBA"/>
</dbReference>
<dbReference type="Gene3D" id="3.40.225.10">
    <property type="entry name" value="Class II aldolase/adducin N-terminal domain"/>
    <property type="match status" value="1"/>
</dbReference>
<dbReference type="HAMAP" id="MF_01677">
    <property type="entry name" value="Salvage_MtnB"/>
    <property type="match status" value="1"/>
</dbReference>
<dbReference type="InterPro" id="IPR001303">
    <property type="entry name" value="Aldolase_II/adducin_N"/>
</dbReference>
<dbReference type="InterPro" id="IPR036409">
    <property type="entry name" value="Aldolase_II/adducin_N_sf"/>
</dbReference>
<dbReference type="InterPro" id="IPR017714">
    <property type="entry name" value="MethylthioRu-1-P_deHdtase_MtnB"/>
</dbReference>
<dbReference type="NCBIfam" id="NF006672">
    <property type="entry name" value="PRK09220.1"/>
    <property type="match status" value="1"/>
</dbReference>
<dbReference type="NCBIfam" id="TIGR03328">
    <property type="entry name" value="salvage_mtnB"/>
    <property type="match status" value="1"/>
</dbReference>
<dbReference type="PANTHER" id="PTHR10640">
    <property type="entry name" value="METHYLTHIORIBULOSE-1-PHOSPHATE DEHYDRATASE"/>
    <property type="match status" value="1"/>
</dbReference>
<dbReference type="PANTHER" id="PTHR10640:SF7">
    <property type="entry name" value="METHYLTHIORIBULOSE-1-PHOSPHATE DEHYDRATASE"/>
    <property type="match status" value="1"/>
</dbReference>
<dbReference type="Pfam" id="PF00596">
    <property type="entry name" value="Aldolase_II"/>
    <property type="match status" value="1"/>
</dbReference>
<dbReference type="SMART" id="SM01007">
    <property type="entry name" value="Aldolase_II"/>
    <property type="match status" value="1"/>
</dbReference>
<dbReference type="SUPFAM" id="SSF53639">
    <property type="entry name" value="AraD/HMP-PK domain-like"/>
    <property type="match status" value="1"/>
</dbReference>
<evidence type="ECO:0000255" key="1">
    <source>
        <dbReference type="HAMAP-Rule" id="MF_01677"/>
    </source>
</evidence>